<organism>
    <name type="scientific">Paracidovorax citrulli (strain AAC00-1)</name>
    <name type="common">Acidovorax citrulli</name>
    <dbReference type="NCBI Taxonomy" id="397945"/>
    <lineage>
        <taxon>Bacteria</taxon>
        <taxon>Pseudomonadati</taxon>
        <taxon>Pseudomonadota</taxon>
        <taxon>Betaproteobacteria</taxon>
        <taxon>Burkholderiales</taxon>
        <taxon>Comamonadaceae</taxon>
        <taxon>Paracidovorax</taxon>
    </lineage>
</organism>
<protein>
    <recommendedName>
        <fullName evidence="1">NADH-quinone oxidoreductase subunit C</fullName>
        <ecNumber evidence="1">7.1.1.-</ecNumber>
    </recommendedName>
    <alternativeName>
        <fullName evidence="1">NADH dehydrogenase I subunit C</fullName>
    </alternativeName>
    <alternativeName>
        <fullName evidence="1">NDH-1 subunit C</fullName>
    </alternativeName>
</protein>
<proteinExistence type="inferred from homology"/>
<name>NUOC_PARC0</name>
<feature type="chain" id="PRO_0000358034" description="NADH-quinone oxidoreductase subunit C">
    <location>
        <begin position="1"/>
        <end position="202"/>
    </location>
</feature>
<evidence type="ECO:0000255" key="1">
    <source>
        <dbReference type="HAMAP-Rule" id="MF_01357"/>
    </source>
</evidence>
<keyword id="KW-0997">Cell inner membrane</keyword>
<keyword id="KW-1003">Cell membrane</keyword>
<keyword id="KW-0472">Membrane</keyword>
<keyword id="KW-0520">NAD</keyword>
<keyword id="KW-0874">Quinone</keyword>
<keyword id="KW-1278">Translocase</keyword>
<keyword id="KW-0813">Transport</keyword>
<keyword id="KW-0830">Ubiquinone</keyword>
<dbReference type="EC" id="7.1.1.-" evidence="1"/>
<dbReference type="EMBL" id="CP000512">
    <property type="protein sequence ID" value="ABM31856.1"/>
    <property type="molecule type" value="Genomic_DNA"/>
</dbReference>
<dbReference type="RefSeq" id="WP_011794408.1">
    <property type="nucleotide sequence ID" value="NC_008752.1"/>
</dbReference>
<dbReference type="SMR" id="A1TLL8"/>
<dbReference type="STRING" id="397945.Aave_1265"/>
<dbReference type="GeneID" id="79790928"/>
<dbReference type="KEGG" id="aav:Aave_1265"/>
<dbReference type="eggNOG" id="COG0852">
    <property type="taxonomic scope" value="Bacteria"/>
</dbReference>
<dbReference type="HOGENOM" id="CLU_042628_2_1_4"/>
<dbReference type="OrthoDB" id="9803286at2"/>
<dbReference type="Proteomes" id="UP000002596">
    <property type="component" value="Chromosome"/>
</dbReference>
<dbReference type="GO" id="GO:0005886">
    <property type="term" value="C:plasma membrane"/>
    <property type="evidence" value="ECO:0007669"/>
    <property type="project" value="UniProtKB-SubCell"/>
</dbReference>
<dbReference type="GO" id="GO:0008137">
    <property type="term" value="F:NADH dehydrogenase (ubiquinone) activity"/>
    <property type="evidence" value="ECO:0007669"/>
    <property type="project" value="InterPro"/>
</dbReference>
<dbReference type="GO" id="GO:0050136">
    <property type="term" value="F:NADH:ubiquinone reductase (non-electrogenic) activity"/>
    <property type="evidence" value="ECO:0007669"/>
    <property type="project" value="UniProtKB-UniRule"/>
</dbReference>
<dbReference type="GO" id="GO:0048038">
    <property type="term" value="F:quinone binding"/>
    <property type="evidence" value="ECO:0007669"/>
    <property type="project" value="UniProtKB-KW"/>
</dbReference>
<dbReference type="Gene3D" id="3.30.460.80">
    <property type="entry name" value="NADH:ubiquinone oxidoreductase, 30kDa subunit"/>
    <property type="match status" value="1"/>
</dbReference>
<dbReference type="HAMAP" id="MF_01357">
    <property type="entry name" value="NDH1_NuoC"/>
    <property type="match status" value="1"/>
</dbReference>
<dbReference type="InterPro" id="IPR010218">
    <property type="entry name" value="NADH_DH_suC"/>
</dbReference>
<dbReference type="InterPro" id="IPR037232">
    <property type="entry name" value="NADH_quin_OxRdtase_su_C/D-like"/>
</dbReference>
<dbReference type="InterPro" id="IPR001268">
    <property type="entry name" value="NADH_UbQ_OxRdtase_30kDa_su"/>
</dbReference>
<dbReference type="InterPro" id="IPR020396">
    <property type="entry name" value="NADH_UbQ_OxRdtase_CS"/>
</dbReference>
<dbReference type="NCBIfam" id="TIGR01961">
    <property type="entry name" value="NuoC_fam"/>
    <property type="match status" value="1"/>
</dbReference>
<dbReference type="NCBIfam" id="NF004730">
    <property type="entry name" value="PRK06074.1-1"/>
    <property type="match status" value="1"/>
</dbReference>
<dbReference type="PANTHER" id="PTHR10884:SF14">
    <property type="entry name" value="NADH DEHYDROGENASE [UBIQUINONE] IRON-SULFUR PROTEIN 3, MITOCHONDRIAL"/>
    <property type="match status" value="1"/>
</dbReference>
<dbReference type="PANTHER" id="PTHR10884">
    <property type="entry name" value="NADH DEHYDROGENASE UBIQUINONE IRON-SULFUR PROTEIN 3"/>
    <property type="match status" value="1"/>
</dbReference>
<dbReference type="Pfam" id="PF00329">
    <property type="entry name" value="Complex1_30kDa"/>
    <property type="match status" value="1"/>
</dbReference>
<dbReference type="SUPFAM" id="SSF143243">
    <property type="entry name" value="Nqo5-like"/>
    <property type="match status" value="1"/>
</dbReference>
<dbReference type="PROSITE" id="PS00542">
    <property type="entry name" value="COMPLEX1_30K"/>
    <property type="match status" value="1"/>
</dbReference>
<accession>A1TLL8</accession>
<sequence length="202" mass="22756">MTAIAIRPEALRDAVAAALGDKVRDIVLALDELTVTVSAADYLAAMQLLRDAPGCRFEQLMDLCGIDYSTYGDVGTEGPRYAVVSHLLSVSLNQRVRVKVFCPDDDFPVVASVSGIWNSANWYEREAFDLYGIVFDGHDDLRRILTDYGFIGHPFRKDFPLSGHVEMRYDTEARRVVYEPVTIEPREITPRIIREEKYGGLH</sequence>
<reference key="1">
    <citation type="submission" date="2006-12" db="EMBL/GenBank/DDBJ databases">
        <title>Complete sequence of Acidovorax avenae subsp. citrulli AAC00-1.</title>
        <authorList>
            <person name="Copeland A."/>
            <person name="Lucas S."/>
            <person name="Lapidus A."/>
            <person name="Barry K."/>
            <person name="Detter J.C."/>
            <person name="Glavina del Rio T."/>
            <person name="Dalin E."/>
            <person name="Tice H."/>
            <person name="Pitluck S."/>
            <person name="Kiss H."/>
            <person name="Brettin T."/>
            <person name="Bruce D."/>
            <person name="Han C."/>
            <person name="Tapia R."/>
            <person name="Gilna P."/>
            <person name="Schmutz J."/>
            <person name="Larimer F."/>
            <person name="Land M."/>
            <person name="Hauser L."/>
            <person name="Kyrpides N."/>
            <person name="Kim E."/>
            <person name="Stahl D."/>
            <person name="Richardson P."/>
        </authorList>
    </citation>
    <scope>NUCLEOTIDE SEQUENCE [LARGE SCALE GENOMIC DNA]</scope>
    <source>
        <strain>AAC00-1</strain>
    </source>
</reference>
<gene>
    <name evidence="1" type="primary">nuoC</name>
    <name type="ordered locus">Aave_1265</name>
</gene>
<comment type="function">
    <text evidence="1">NDH-1 shuttles electrons from NADH, via FMN and iron-sulfur (Fe-S) centers, to quinones in the respiratory chain. The immediate electron acceptor for the enzyme in this species is believed to be ubiquinone. Couples the redox reaction to proton translocation (for every two electrons transferred, four hydrogen ions are translocated across the cytoplasmic membrane), and thus conserves the redox energy in a proton gradient.</text>
</comment>
<comment type="catalytic activity">
    <reaction evidence="1">
        <text>a quinone + NADH + 5 H(+)(in) = a quinol + NAD(+) + 4 H(+)(out)</text>
        <dbReference type="Rhea" id="RHEA:57888"/>
        <dbReference type="ChEBI" id="CHEBI:15378"/>
        <dbReference type="ChEBI" id="CHEBI:24646"/>
        <dbReference type="ChEBI" id="CHEBI:57540"/>
        <dbReference type="ChEBI" id="CHEBI:57945"/>
        <dbReference type="ChEBI" id="CHEBI:132124"/>
    </reaction>
</comment>
<comment type="subunit">
    <text evidence="1">NDH-1 is composed of 14 different subunits. Subunits NuoB, C, D, E, F, and G constitute the peripheral sector of the complex.</text>
</comment>
<comment type="subcellular location">
    <subcellularLocation>
        <location evidence="1">Cell inner membrane</location>
        <topology evidence="1">Peripheral membrane protein</topology>
        <orientation evidence="1">Cytoplasmic side</orientation>
    </subcellularLocation>
</comment>
<comment type="similarity">
    <text evidence="1">Belongs to the complex I 30 kDa subunit family.</text>
</comment>